<accession>Q9PR63</accession>
<evidence type="ECO:0000255" key="1">
    <source>
        <dbReference type="HAMAP-Rule" id="MF_01897"/>
    </source>
</evidence>
<evidence type="ECO:0000255" key="2">
    <source>
        <dbReference type="PROSITE-ProRule" id="PRU01384"/>
    </source>
</evidence>
<sequence length="840" mass="94252">MALKKPKKSRLTTEEIKQQLEGSTIKEQSITKEVETSFLDYSMSVIVARALPDVRDGFKPVHRRALFAAFENGMTHDKPYKKSARWVGDVIGKYHPHGDQAVYQTIVRMAQDFSMRYLLVDGHGNFGSIDGDSAAAMRYTEARLSKISYELLKYIDKETVDFVPNYDASEQEPSVLPSGFPNLLTNGTTGIAVGMATNIPPHNLTEVCQAIKAYAKNHNVTISEIMEYLKGPDFPTGAEIYGDSGIIKYFNTGRGSVTIRSKYEIEDIGQGRVAIVVTEIPYMVNKANLIEKIVELVTNKQIEGISDLRDESSRDGIRIVIEVKRDVIPEVLLNKLFKTTPLQTNFSVNNLALVNGVPMVLNIKEMIKYYFEHQIEILVRRTNFDLKKAKERIHIVEGLVIAVNNIDEVIKIIKASGDDDIASKSLIQRFDLTELQTKAILEMRLRALTGLNIDKLKKEYEDLILVIKDLEDVLNNYNRQVNIICENLDYLIEKFGDERRTEIMYGVSSHIDDEDLIPVEDIVVTMSKRGYFKRLPIDTYKNQRRGGVGVQGLKTYEDDDVEKILVANTHTDLLFFSDLGRVYRLRGHEVPLGSRQSKGIPAINFLPIEKSESILTILPIDNYDQGSLFFTTSKGIIKRANLSDFESIRANGKIAITLKDGDKLFSVMQTLGNDEVFIGASNGNVIRFNENDAREMGRIATGVKGINLENDEYVVGTGLSSHGEYVLAVGSKGLGKLTDINDYRLTKRGAKGVNTLKVNDKTGNLVSIKVVNREEEALIITTSGKVIRLSIKDISVIGRNTSGVKLISLENKEEVKSIAIFKKEEINDEQLLQENDYNLK</sequence>
<protein>
    <recommendedName>
        <fullName evidence="1">DNA gyrase subunit A</fullName>
        <ecNumber evidence="1">5.6.2.2</ecNumber>
    </recommendedName>
</protein>
<dbReference type="EC" id="5.6.2.2" evidence="1"/>
<dbReference type="EMBL" id="AF222894">
    <property type="protein sequence ID" value="AAF30487.1"/>
    <property type="molecule type" value="Genomic_DNA"/>
</dbReference>
<dbReference type="RefSeq" id="WP_006688806.1">
    <property type="nucleotide sequence ID" value="NC_002162.1"/>
</dbReference>
<dbReference type="SMR" id="Q9PR63"/>
<dbReference type="STRING" id="273119.UU082"/>
<dbReference type="EnsemblBacteria" id="AAF30487">
    <property type="protein sequence ID" value="AAF30487"/>
    <property type="gene ID" value="UU082"/>
</dbReference>
<dbReference type="GeneID" id="29672273"/>
<dbReference type="KEGG" id="uur:UU082"/>
<dbReference type="eggNOG" id="COG0188">
    <property type="taxonomic scope" value="Bacteria"/>
</dbReference>
<dbReference type="HOGENOM" id="CLU_002977_6_1_14"/>
<dbReference type="OrthoDB" id="9806486at2"/>
<dbReference type="Proteomes" id="UP000000423">
    <property type="component" value="Chromosome"/>
</dbReference>
<dbReference type="GO" id="GO:0005694">
    <property type="term" value="C:chromosome"/>
    <property type="evidence" value="ECO:0007669"/>
    <property type="project" value="InterPro"/>
</dbReference>
<dbReference type="GO" id="GO:0005737">
    <property type="term" value="C:cytoplasm"/>
    <property type="evidence" value="ECO:0007669"/>
    <property type="project" value="UniProtKB-SubCell"/>
</dbReference>
<dbReference type="GO" id="GO:0009330">
    <property type="term" value="C:DNA topoisomerase type II (double strand cut, ATP-hydrolyzing) complex"/>
    <property type="evidence" value="ECO:0007669"/>
    <property type="project" value="TreeGrafter"/>
</dbReference>
<dbReference type="GO" id="GO:0005524">
    <property type="term" value="F:ATP binding"/>
    <property type="evidence" value="ECO:0007669"/>
    <property type="project" value="UniProtKB-UniRule"/>
</dbReference>
<dbReference type="GO" id="GO:0003677">
    <property type="term" value="F:DNA binding"/>
    <property type="evidence" value="ECO:0007669"/>
    <property type="project" value="UniProtKB-UniRule"/>
</dbReference>
<dbReference type="GO" id="GO:0034335">
    <property type="term" value="F:DNA negative supercoiling activity"/>
    <property type="evidence" value="ECO:0007669"/>
    <property type="project" value="UniProtKB-ARBA"/>
</dbReference>
<dbReference type="GO" id="GO:0006265">
    <property type="term" value="P:DNA topological change"/>
    <property type="evidence" value="ECO:0007669"/>
    <property type="project" value="UniProtKB-UniRule"/>
</dbReference>
<dbReference type="GO" id="GO:0006261">
    <property type="term" value="P:DNA-templated DNA replication"/>
    <property type="evidence" value="ECO:0007669"/>
    <property type="project" value="UniProtKB-UniRule"/>
</dbReference>
<dbReference type="CDD" id="cd00187">
    <property type="entry name" value="TOP4c"/>
    <property type="match status" value="1"/>
</dbReference>
<dbReference type="FunFam" id="1.10.268.10:FF:000001">
    <property type="entry name" value="DNA gyrase subunit A"/>
    <property type="match status" value="1"/>
</dbReference>
<dbReference type="FunFam" id="3.30.1360.40:FF:000002">
    <property type="entry name" value="DNA gyrase subunit A"/>
    <property type="match status" value="1"/>
</dbReference>
<dbReference type="FunFam" id="3.90.199.10:FF:000001">
    <property type="entry name" value="DNA gyrase subunit A"/>
    <property type="match status" value="1"/>
</dbReference>
<dbReference type="FunFam" id="2.120.10.90:FF:000005">
    <property type="entry name" value="DNA topoisomerase 4 subunit A"/>
    <property type="match status" value="1"/>
</dbReference>
<dbReference type="Gene3D" id="3.30.1360.40">
    <property type="match status" value="1"/>
</dbReference>
<dbReference type="Gene3D" id="2.120.10.90">
    <property type="entry name" value="DNA gyrase/topoisomerase IV, subunit A, C-terminal"/>
    <property type="match status" value="1"/>
</dbReference>
<dbReference type="Gene3D" id="3.90.199.10">
    <property type="entry name" value="Topoisomerase II, domain 5"/>
    <property type="match status" value="1"/>
</dbReference>
<dbReference type="Gene3D" id="1.10.268.10">
    <property type="entry name" value="Topoisomerase, domain 3"/>
    <property type="match status" value="1"/>
</dbReference>
<dbReference type="HAMAP" id="MF_01897">
    <property type="entry name" value="GyrA"/>
    <property type="match status" value="1"/>
</dbReference>
<dbReference type="InterPro" id="IPR005743">
    <property type="entry name" value="GyrA"/>
</dbReference>
<dbReference type="InterPro" id="IPR006691">
    <property type="entry name" value="GyrA/parC_rep"/>
</dbReference>
<dbReference type="InterPro" id="IPR035516">
    <property type="entry name" value="Gyrase/topoIV_suA_C"/>
</dbReference>
<dbReference type="InterPro" id="IPR013760">
    <property type="entry name" value="Topo_IIA-like_dom_sf"/>
</dbReference>
<dbReference type="InterPro" id="IPR013758">
    <property type="entry name" value="Topo_IIA_A/C_ab"/>
</dbReference>
<dbReference type="InterPro" id="IPR013757">
    <property type="entry name" value="Topo_IIA_A_a_sf"/>
</dbReference>
<dbReference type="InterPro" id="IPR002205">
    <property type="entry name" value="Topo_IIA_dom_A"/>
</dbReference>
<dbReference type="InterPro" id="IPR050220">
    <property type="entry name" value="Type_II_DNA_Topoisomerases"/>
</dbReference>
<dbReference type="NCBIfam" id="TIGR01063">
    <property type="entry name" value="gyrA"/>
    <property type="match status" value="1"/>
</dbReference>
<dbReference type="NCBIfam" id="NF004043">
    <property type="entry name" value="PRK05560.1"/>
    <property type="match status" value="1"/>
</dbReference>
<dbReference type="NCBIfam" id="NF004044">
    <property type="entry name" value="PRK05561.1"/>
    <property type="match status" value="1"/>
</dbReference>
<dbReference type="PANTHER" id="PTHR43493:SF5">
    <property type="entry name" value="DNA GYRASE SUBUNIT A, CHLOROPLASTIC_MITOCHONDRIAL"/>
    <property type="match status" value="1"/>
</dbReference>
<dbReference type="PANTHER" id="PTHR43493">
    <property type="entry name" value="DNA GYRASE/TOPOISOMERASE SUBUNIT A"/>
    <property type="match status" value="1"/>
</dbReference>
<dbReference type="Pfam" id="PF03989">
    <property type="entry name" value="DNA_gyraseA_C"/>
    <property type="match status" value="6"/>
</dbReference>
<dbReference type="Pfam" id="PF00521">
    <property type="entry name" value="DNA_topoisoIV"/>
    <property type="match status" value="1"/>
</dbReference>
<dbReference type="SMART" id="SM00434">
    <property type="entry name" value="TOP4c"/>
    <property type="match status" value="1"/>
</dbReference>
<dbReference type="SUPFAM" id="SSF101904">
    <property type="entry name" value="GyrA/ParC C-terminal domain-like"/>
    <property type="match status" value="1"/>
</dbReference>
<dbReference type="SUPFAM" id="SSF56719">
    <property type="entry name" value="Type II DNA topoisomerase"/>
    <property type="match status" value="1"/>
</dbReference>
<dbReference type="PROSITE" id="PS52040">
    <property type="entry name" value="TOPO_IIA"/>
    <property type="match status" value="1"/>
</dbReference>
<name>GYRA_UREPA</name>
<feature type="chain" id="PRO_0000145272" description="DNA gyrase subunit A">
    <location>
        <begin position="1"/>
        <end position="840"/>
    </location>
</feature>
<feature type="domain" description="Topo IIA-type catalytic" evidence="2">
    <location>
        <begin position="51"/>
        <end position="516"/>
    </location>
</feature>
<feature type="short sequence motif" description="GyrA-box" evidence="1">
    <location>
        <begin position="543"/>
        <end position="549"/>
    </location>
</feature>
<feature type="active site" description="O-(5'-phospho-DNA)-tyrosine intermediate" evidence="1">
    <location>
        <position position="139"/>
    </location>
</feature>
<reference key="1">
    <citation type="journal article" date="2000" name="Nature">
        <title>The complete sequence of the mucosal pathogen Ureaplasma urealyticum.</title>
        <authorList>
            <person name="Glass J.I."/>
            <person name="Lefkowitz E.J."/>
            <person name="Glass J.S."/>
            <person name="Heiner C.R."/>
            <person name="Chen E.Y."/>
            <person name="Cassell G.H."/>
        </authorList>
    </citation>
    <scope>NUCLEOTIDE SEQUENCE [LARGE SCALE GENOMIC DNA]</scope>
    <source>
        <strain>ATCC 700970</strain>
    </source>
</reference>
<comment type="function">
    <text evidence="1">A type II topoisomerase that negatively supercoils closed circular double-stranded (ds) DNA in an ATP-dependent manner to modulate DNA topology and maintain chromosomes in an underwound state. Negative supercoiling favors strand separation, and DNA replication, transcription, recombination and repair, all of which involve strand separation. Also able to catalyze the interconversion of other topological isomers of dsDNA rings, including catenanes and knotted rings. Type II topoisomerases break and join 2 DNA strands simultaneously in an ATP-dependent manner.</text>
</comment>
<comment type="catalytic activity">
    <reaction evidence="1">
        <text>ATP-dependent breakage, passage and rejoining of double-stranded DNA.</text>
        <dbReference type="EC" id="5.6.2.2"/>
    </reaction>
</comment>
<comment type="subunit">
    <text evidence="1">Heterotetramer, composed of two GyrA and two GyrB chains. In the heterotetramer, GyrA contains the active site tyrosine that forms a transient covalent intermediate with DNA, while GyrB binds cofactors and catalyzes ATP hydrolysis.</text>
</comment>
<comment type="subcellular location">
    <subcellularLocation>
        <location evidence="1">Cytoplasm</location>
    </subcellularLocation>
</comment>
<comment type="miscellaneous">
    <text evidence="1">Few gyrases are as efficient as E.coli at forming negative supercoils. Not all organisms have 2 type II topoisomerases; in organisms with a single type II topoisomerase this enzyme also has to decatenate newly replicated chromosomes.</text>
</comment>
<comment type="similarity">
    <text evidence="1">Belongs to the type II topoisomerase GyrA/ParC subunit family.</text>
</comment>
<organism>
    <name type="scientific">Ureaplasma parvum serovar 3 (strain ATCC 700970)</name>
    <dbReference type="NCBI Taxonomy" id="273119"/>
    <lineage>
        <taxon>Bacteria</taxon>
        <taxon>Bacillati</taxon>
        <taxon>Mycoplasmatota</taxon>
        <taxon>Mycoplasmoidales</taxon>
        <taxon>Mycoplasmoidaceae</taxon>
        <taxon>Ureaplasma</taxon>
    </lineage>
</organism>
<keyword id="KW-0067">ATP-binding</keyword>
<keyword id="KW-0963">Cytoplasm</keyword>
<keyword id="KW-0238">DNA-binding</keyword>
<keyword id="KW-0413">Isomerase</keyword>
<keyword id="KW-0547">Nucleotide-binding</keyword>
<keyword id="KW-1185">Reference proteome</keyword>
<keyword id="KW-0799">Topoisomerase</keyword>
<proteinExistence type="inferred from homology"/>
<gene>
    <name evidence="1" type="primary">gyrA</name>
    <name type="ordered locus">UU082</name>
</gene>